<reference key="1">
    <citation type="journal article" date="2003" name="Nature">
        <title>The genome sequence of Bacillus anthracis Ames and comparison to closely related bacteria.</title>
        <authorList>
            <person name="Read T.D."/>
            <person name="Peterson S.N."/>
            <person name="Tourasse N.J."/>
            <person name="Baillie L.W."/>
            <person name="Paulsen I.T."/>
            <person name="Nelson K.E."/>
            <person name="Tettelin H."/>
            <person name="Fouts D.E."/>
            <person name="Eisen J.A."/>
            <person name="Gill S.R."/>
            <person name="Holtzapple E.K."/>
            <person name="Okstad O.A."/>
            <person name="Helgason E."/>
            <person name="Rilstone J."/>
            <person name="Wu M."/>
            <person name="Kolonay J.F."/>
            <person name="Beanan M.J."/>
            <person name="Dodson R.J."/>
            <person name="Brinkac L.M."/>
            <person name="Gwinn M.L."/>
            <person name="DeBoy R.T."/>
            <person name="Madpu R."/>
            <person name="Daugherty S.C."/>
            <person name="Durkin A.S."/>
            <person name="Haft D.H."/>
            <person name="Nelson W.C."/>
            <person name="Peterson J.D."/>
            <person name="Pop M."/>
            <person name="Khouri H.M."/>
            <person name="Radune D."/>
            <person name="Benton J.L."/>
            <person name="Mahamoud Y."/>
            <person name="Jiang L."/>
            <person name="Hance I.R."/>
            <person name="Weidman J.F."/>
            <person name="Berry K.J."/>
            <person name="Plaut R.D."/>
            <person name="Wolf A.M."/>
            <person name="Watkins K.L."/>
            <person name="Nierman W.C."/>
            <person name="Hazen A."/>
            <person name="Cline R.T."/>
            <person name="Redmond C."/>
            <person name="Thwaite J.E."/>
            <person name="White O."/>
            <person name="Salzberg S.L."/>
            <person name="Thomason B."/>
            <person name="Friedlander A.M."/>
            <person name="Koehler T.M."/>
            <person name="Hanna P.C."/>
            <person name="Kolstoe A.-B."/>
            <person name="Fraser C.M."/>
        </authorList>
    </citation>
    <scope>NUCLEOTIDE SEQUENCE [LARGE SCALE GENOMIC DNA]</scope>
    <source>
        <strain>Ames / isolate Porton</strain>
    </source>
</reference>
<reference key="2">
    <citation type="journal article" date="2009" name="J. Bacteriol.">
        <title>The complete genome sequence of Bacillus anthracis Ames 'Ancestor'.</title>
        <authorList>
            <person name="Ravel J."/>
            <person name="Jiang L."/>
            <person name="Stanley S.T."/>
            <person name="Wilson M.R."/>
            <person name="Decker R.S."/>
            <person name="Read T.D."/>
            <person name="Worsham P."/>
            <person name="Keim P.S."/>
            <person name="Salzberg S.L."/>
            <person name="Fraser-Liggett C.M."/>
            <person name="Rasko D.A."/>
        </authorList>
    </citation>
    <scope>NUCLEOTIDE SEQUENCE [LARGE SCALE GENOMIC DNA]</scope>
    <source>
        <strain>Ames ancestor</strain>
    </source>
</reference>
<reference key="3">
    <citation type="submission" date="2004-01" db="EMBL/GenBank/DDBJ databases">
        <title>Complete genome sequence of Bacillus anthracis Sterne.</title>
        <authorList>
            <person name="Brettin T.S."/>
            <person name="Bruce D."/>
            <person name="Challacombe J.F."/>
            <person name="Gilna P."/>
            <person name="Han C."/>
            <person name="Hill K."/>
            <person name="Hitchcock P."/>
            <person name="Jackson P."/>
            <person name="Keim P."/>
            <person name="Longmire J."/>
            <person name="Lucas S."/>
            <person name="Okinaka R."/>
            <person name="Richardson P."/>
            <person name="Rubin E."/>
            <person name="Tice H."/>
        </authorList>
    </citation>
    <scope>NUCLEOTIDE SEQUENCE [LARGE SCALE GENOMIC DNA]</scope>
    <source>
        <strain>Sterne</strain>
    </source>
</reference>
<feature type="chain" id="PRO_0000075546" description="2-C-methyl-D-erythritol 4-phosphate cytidylyltransferase">
    <location>
        <begin position="1"/>
        <end position="226"/>
    </location>
</feature>
<feature type="site" description="Transition state stabilizer" evidence="1">
    <location>
        <position position="14"/>
    </location>
</feature>
<feature type="site" description="Transition state stabilizer" evidence="1">
    <location>
        <position position="21"/>
    </location>
</feature>
<feature type="site" description="Positions MEP for the nucleophilic attack" evidence="1">
    <location>
        <position position="151"/>
    </location>
</feature>
<feature type="site" description="Positions MEP for the nucleophilic attack" evidence="1">
    <location>
        <position position="207"/>
    </location>
</feature>
<sequence length="226" mass="25121">MYTLIIPAAGQGKRMGAGKNKLFLLINEVPIIVHTLRAFEKDKACKNIIMAINEEERPYFEELMQKYPVEKPVQFIQGGAERQDSVYNAIQHTTDVEYVLVHDGARPFVTNKVIQDVLTAAEKYGASICAVPVKDTVKKVEQGVVVETVERSQLKAVQTPQGFSVSLLLEAHRSAKQSCFLGTDDASLVERIGKQVGVVEGSYYNIKVTTPEDLLIAESFLHVQKK</sequence>
<proteinExistence type="inferred from homology"/>
<organism>
    <name type="scientific">Bacillus anthracis</name>
    <dbReference type="NCBI Taxonomy" id="1392"/>
    <lineage>
        <taxon>Bacteria</taxon>
        <taxon>Bacillati</taxon>
        <taxon>Bacillota</taxon>
        <taxon>Bacilli</taxon>
        <taxon>Bacillales</taxon>
        <taxon>Bacillaceae</taxon>
        <taxon>Bacillus</taxon>
        <taxon>Bacillus cereus group</taxon>
    </lineage>
</organism>
<comment type="function">
    <text evidence="1">Catalyzes the formation of 4-diphosphocytidyl-2-C-methyl-D-erythritol from CTP and 2-C-methyl-D-erythritol 4-phosphate (MEP).</text>
</comment>
<comment type="catalytic activity">
    <reaction evidence="1">
        <text>2-C-methyl-D-erythritol 4-phosphate + CTP + H(+) = 4-CDP-2-C-methyl-D-erythritol + diphosphate</text>
        <dbReference type="Rhea" id="RHEA:13429"/>
        <dbReference type="ChEBI" id="CHEBI:15378"/>
        <dbReference type="ChEBI" id="CHEBI:33019"/>
        <dbReference type="ChEBI" id="CHEBI:37563"/>
        <dbReference type="ChEBI" id="CHEBI:57823"/>
        <dbReference type="ChEBI" id="CHEBI:58262"/>
        <dbReference type="EC" id="2.7.7.60"/>
    </reaction>
</comment>
<comment type="pathway">
    <text evidence="1">Isoprenoid biosynthesis; isopentenyl diphosphate biosynthesis via DXP pathway; isopentenyl diphosphate from 1-deoxy-D-xylulose 5-phosphate: step 2/6.</text>
</comment>
<comment type="similarity">
    <text evidence="1">Belongs to the IspD/TarI cytidylyltransferase family. IspD subfamily.</text>
</comment>
<keyword id="KW-0414">Isoprene biosynthesis</keyword>
<keyword id="KW-0548">Nucleotidyltransferase</keyword>
<keyword id="KW-1185">Reference proteome</keyword>
<keyword id="KW-0808">Transferase</keyword>
<dbReference type="EC" id="2.7.7.60" evidence="1"/>
<dbReference type="EMBL" id="AE016879">
    <property type="protein sequence ID" value="AAP24139.1"/>
    <property type="molecule type" value="Genomic_DNA"/>
</dbReference>
<dbReference type="EMBL" id="AE017334">
    <property type="protein sequence ID" value="AAT29164.1"/>
    <property type="molecule type" value="Genomic_DNA"/>
</dbReference>
<dbReference type="EMBL" id="AE017225">
    <property type="protein sequence ID" value="AAT52422.1"/>
    <property type="molecule type" value="Genomic_DNA"/>
</dbReference>
<dbReference type="RefSeq" id="NP_842653.1">
    <property type="nucleotide sequence ID" value="NC_003997.3"/>
</dbReference>
<dbReference type="RefSeq" id="WP_000288292.1">
    <property type="nucleotide sequence ID" value="NZ_WXXJ01000051.1"/>
</dbReference>
<dbReference type="RefSeq" id="YP_026371.1">
    <property type="nucleotide sequence ID" value="NC_005945.1"/>
</dbReference>
<dbReference type="SMR" id="Q81VV5"/>
<dbReference type="STRING" id="261594.GBAA_0084"/>
<dbReference type="DNASU" id="1088223"/>
<dbReference type="GeneID" id="45020130"/>
<dbReference type="KEGG" id="ban:BA_0084"/>
<dbReference type="KEGG" id="bar:GBAA_0084"/>
<dbReference type="KEGG" id="bat:BAS0085"/>
<dbReference type="PATRIC" id="fig|198094.11.peg.82"/>
<dbReference type="eggNOG" id="COG1211">
    <property type="taxonomic scope" value="Bacteria"/>
</dbReference>
<dbReference type="HOGENOM" id="CLU_061281_2_2_9"/>
<dbReference type="OMA" id="TPMLIHA"/>
<dbReference type="OrthoDB" id="9806837at2"/>
<dbReference type="UniPathway" id="UPA00056">
    <property type="reaction ID" value="UER00093"/>
</dbReference>
<dbReference type="Proteomes" id="UP000000427">
    <property type="component" value="Chromosome"/>
</dbReference>
<dbReference type="Proteomes" id="UP000000594">
    <property type="component" value="Chromosome"/>
</dbReference>
<dbReference type="GO" id="GO:0050518">
    <property type="term" value="F:2-C-methyl-D-erythritol 4-phosphate cytidylyltransferase activity"/>
    <property type="evidence" value="ECO:0007669"/>
    <property type="project" value="UniProtKB-UniRule"/>
</dbReference>
<dbReference type="GO" id="GO:0019288">
    <property type="term" value="P:isopentenyl diphosphate biosynthetic process, methylerythritol 4-phosphate pathway"/>
    <property type="evidence" value="ECO:0007669"/>
    <property type="project" value="UniProtKB-UniRule"/>
</dbReference>
<dbReference type="CDD" id="cd02516">
    <property type="entry name" value="CDP-ME_synthetase"/>
    <property type="match status" value="1"/>
</dbReference>
<dbReference type="FunFam" id="3.90.550.10:FF:000003">
    <property type="entry name" value="2-C-methyl-D-erythritol 4-phosphate cytidylyltransferase"/>
    <property type="match status" value="1"/>
</dbReference>
<dbReference type="Gene3D" id="3.90.550.10">
    <property type="entry name" value="Spore Coat Polysaccharide Biosynthesis Protein SpsA, Chain A"/>
    <property type="match status" value="1"/>
</dbReference>
<dbReference type="HAMAP" id="MF_00108">
    <property type="entry name" value="IspD"/>
    <property type="match status" value="1"/>
</dbReference>
<dbReference type="InterPro" id="IPR001228">
    <property type="entry name" value="IspD"/>
</dbReference>
<dbReference type="InterPro" id="IPR034683">
    <property type="entry name" value="IspD/TarI"/>
</dbReference>
<dbReference type="InterPro" id="IPR050088">
    <property type="entry name" value="IspD/TarI_cytidylyltransf_bact"/>
</dbReference>
<dbReference type="InterPro" id="IPR018294">
    <property type="entry name" value="ISPD_synthase_CS"/>
</dbReference>
<dbReference type="InterPro" id="IPR029044">
    <property type="entry name" value="Nucleotide-diphossugar_trans"/>
</dbReference>
<dbReference type="NCBIfam" id="TIGR00453">
    <property type="entry name" value="ispD"/>
    <property type="match status" value="1"/>
</dbReference>
<dbReference type="PANTHER" id="PTHR32125">
    <property type="entry name" value="2-C-METHYL-D-ERYTHRITOL 4-PHOSPHATE CYTIDYLYLTRANSFERASE, CHLOROPLASTIC"/>
    <property type="match status" value="1"/>
</dbReference>
<dbReference type="PANTHER" id="PTHR32125:SF4">
    <property type="entry name" value="2-C-METHYL-D-ERYTHRITOL 4-PHOSPHATE CYTIDYLYLTRANSFERASE, CHLOROPLASTIC"/>
    <property type="match status" value="1"/>
</dbReference>
<dbReference type="Pfam" id="PF01128">
    <property type="entry name" value="IspD"/>
    <property type="match status" value="1"/>
</dbReference>
<dbReference type="SUPFAM" id="SSF53448">
    <property type="entry name" value="Nucleotide-diphospho-sugar transferases"/>
    <property type="match status" value="1"/>
</dbReference>
<dbReference type="PROSITE" id="PS01295">
    <property type="entry name" value="ISPD"/>
    <property type="match status" value="1"/>
</dbReference>
<gene>
    <name evidence="1" type="primary">ispD</name>
    <name type="ordered locus">BA_0084</name>
    <name type="ordered locus">GBAA_0084</name>
    <name type="ordered locus">BAS0085</name>
</gene>
<name>ISPD_BACAN</name>
<evidence type="ECO:0000255" key="1">
    <source>
        <dbReference type="HAMAP-Rule" id="MF_00108"/>
    </source>
</evidence>
<protein>
    <recommendedName>
        <fullName evidence="1">2-C-methyl-D-erythritol 4-phosphate cytidylyltransferase</fullName>
        <ecNumber evidence="1">2.7.7.60</ecNumber>
    </recommendedName>
    <alternativeName>
        <fullName evidence="1">4-diphosphocytidyl-2C-methyl-D-erythritol synthase</fullName>
    </alternativeName>
    <alternativeName>
        <fullName evidence="1">MEP cytidylyltransferase</fullName>
        <shortName evidence="1">MCT</shortName>
    </alternativeName>
</protein>
<accession>Q81VV5</accession>
<accession>Q6I4V9</accession>
<accession>Q6KYK3</accession>